<keyword id="KW-0090">Biological rhythms</keyword>
<keyword id="KW-0963">Cytoplasm</keyword>
<keyword id="KW-0238">DNA-binding</keyword>
<keyword id="KW-0496">Mitochondrion</keyword>
<keyword id="KW-0507">mRNA processing</keyword>
<keyword id="KW-0508">mRNA splicing</keyword>
<keyword id="KW-0539">Nucleus</keyword>
<keyword id="KW-1185">Reference proteome</keyword>
<keyword id="KW-0677">Repeat</keyword>
<keyword id="KW-0678">Repressor</keyword>
<keyword id="KW-0694">RNA-binding</keyword>
<keyword id="KW-0804">Transcription</keyword>
<keyword id="KW-0805">Transcription regulation</keyword>
<organism>
    <name type="scientific">Gallus gallus</name>
    <name type="common">Chicken</name>
    <dbReference type="NCBI Taxonomy" id="9031"/>
    <lineage>
        <taxon>Eukaryota</taxon>
        <taxon>Metazoa</taxon>
        <taxon>Chordata</taxon>
        <taxon>Craniata</taxon>
        <taxon>Vertebrata</taxon>
        <taxon>Euteleostomi</taxon>
        <taxon>Archelosauria</taxon>
        <taxon>Archosauria</taxon>
        <taxon>Dinosauria</taxon>
        <taxon>Saurischia</taxon>
        <taxon>Theropoda</taxon>
        <taxon>Coelurosauria</taxon>
        <taxon>Aves</taxon>
        <taxon>Neognathae</taxon>
        <taxon>Galloanserae</taxon>
        <taxon>Galliformes</taxon>
        <taxon>Phasianidae</taxon>
        <taxon>Phasianinae</taxon>
        <taxon>Gallus</taxon>
    </lineage>
</organism>
<protein>
    <recommendedName>
        <fullName>TAR DNA-binding protein 43</fullName>
        <shortName>TDP-43</shortName>
    </recommendedName>
</protein>
<gene>
    <name type="primary">TARDBP</name>
    <name type="synonym">TDP43</name>
    <name type="ORF">RCJMB04_5g9</name>
</gene>
<comment type="function">
    <text evidence="2">Probably involved in transcriptional repression (By similarity). May play a role in the maintenance of the circadian clock periodicity (By similarity).</text>
</comment>
<comment type="subunit">
    <text evidence="2">Homodimer.</text>
</comment>
<comment type="subcellular location">
    <subcellularLocation>
        <location evidence="2">Nucleus</location>
    </subcellularLocation>
    <subcellularLocation>
        <location evidence="2">Cytoplasm</location>
    </subcellularLocation>
    <subcellularLocation>
        <location evidence="2">Cytoplasm</location>
        <location evidence="2">Stress granule</location>
    </subcellularLocation>
    <subcellularLocation>
        <location evidence="2">Mitochondrion</location>
    </subcellularLocation>
    <text evidence="2">Continuously travels in and out of the nucleus. Localizes to stress granules in response to oxidative stress. A small subset localizes in mitochondria.</text>
</comment>
<comment type="domain">
    <text evidence="1">The RRM domains can bind to both DNA and RNA.</text>
</comment>
<reference key="1">
    <citation type="journal article" date="2005" name="Genome Biol.">
        <title>Full-length cDNAs from chicken bursal lymphocytes to facilitate gene function analysis.</title>
        <authorList>
            <person name="Caldwell R.B."/>
            <person name="Kierzek A.M."/>
            <person name="Arakawa H."/>
            <person name="Bezzubov Y."/>
            <person name="Zaim J."/>
            <person name="Fiedler P."/>
            <person name="Kutter S."/>
            <person name="Blagodatski A."/>
            <person name="Kostovska D."/>
            <person name="Koter M."/>
            <person name="Plachy J."/>
            <person name="Carninci P."/>
            <person name="Hayashizaki Y."/>
            <person name="Buerstedde J.-M."/>
        </authorList>
    </citation>
    <scope>NUCLEOTIDE SEQUENCE [LARGE SCALE MRNA]</scope>
    <source>
        <strain>CB</strain>
        <tissue>Bursa of Fabricius</tissue>
    </source>
</reference>
<name>TADBP_CHICK</name>
<evidence type="ECO:0000250" key="1"/>
<evidence type="ECO:0000250" key="2">
    <source>
        <dbReference type="UniProtKB" id="Q13148"/>
    </source>
</evidence>
<evidence type="ECO:0000255" key="3">
    <source>
        <dbReference type="PROSITE-ProRule" id="PRU00176"/>
    </source>
</evidence>
<evidence type="ECO:0000256" key="4">
    <source>
        <dbReference type="SAM" id="MobiDB-lite"/>
    </source>
</evidence>
<proteinExistence type="evidence at transcript level"/>
<feature type="chain" id="PRO_0000317416" description="TAR DNA-binding protein 43">
    <location>
        <begin position="1"/>
        <end position="414"/>
    </location>
</feature>
<feature type="domain" description="RRM 1" evidence="3">
    <location>
        <begin position="104"/>
        <end position="200"/>
    </location>
</feature>
<feature type="domain" description="RRM 2" evidence="3">
    <location>
        <begin position="191"/>
        <end position="262"/>
    </location>
</feature>
<feature type="region of interest" description="Disordered" evidence="4">
    <location>
        <begin position="261"/>
        <end position="303"/>
    </location>
</feature>
<feature type="region of interest" description="Disordered" evidence="4">
    <location>
        <begin position="341"/>
        <end position="373"/>
    </location>
</feature>
<feature type="compositionally biased region" description="Basic and acidic residues" evidence="4">
    <location>
        <begin position="261"/>
        <end position="274"/>
    </location>
</feature>
<feature type="compositionally biased region" description="Gly residues" evidence="4">
    <location>
        <begin position="275"/>
        <end position="303"/>
    </location>
</feature>
<feature type="compositionally biased region" description="Low complexity" evidence="4">
    <location>
        <begin position="342"/>
        <end position="373"/>
    </location>
</feature>
<accession>Q5ZLN5</accession>
<sequence length="414" mass="44590">MSEYIRVTEDENDEPIEIPSEDDGTVLLSTVTAQFPGACGLRYRNPVSQCMWGVRLVEGILHAPEAGWGNLVYVVNYPKDNKRKMDETDASSAVKVKRAVQKTSDLIVLGLPWKTTEQDLKEYFSTFGEVLMVQVKKDIKTGHSKGFGFVRFTDYETQVKVMSQRHMIDGRWCDCKLPNSKQSPDEPLRSRKVFVGRCTEDMTADELQQFFAQYGEVVDVFIPKPFRAFAFVTFADDQVAQSLCGEDLIIKGISVHISNAEPKHNSNRQLERGGRFGGNPGGFGNQGGFGNSRGGGGGLGNNQGSNMGGGMNFGAFSINPAMMAAAQAALQSSWGMMGMLASQQNQSGPSGNNQPQGNMQREQNQGFSSGNNSYGGSNSGAAIGWGSASNAGSSSGFNGGFGSSMDSKSSGWGM</sequence>
<dbReference type="EMBL" id="AJ719699">
    <property type="protein sequence ID" value="CAG31358.1"/>
    <property type="molecule type" value="mRNA"/>
</dbReference>
<dbReference type="RefSeq" id="NP_001026049.1">
    <property type="nucleotide sequence ID" value="NM_001030878.1"/>
</dbReference>
<dbReference type="BMRB" id="Q5ZLN5"/>
<dbReference type="SMR" id="Q5ZLN5"/>
<dbReference type="FunCoup" id="Q5ZLN5">
    <property type="interactions" value="3938"/>
</dbReference>
<dbReference type="STRING" id="9031.ENSGALP00000004576"/>
<dbReference type="PaxDb" id="9031-ENSGALP00000042272"/>
<dbReference type="GeneID" id="419453"/>
<dbReference type="KEGG" id="gga:419453"/>
<dbReference type="CTD" id="23435"/>
<dbReference type="VEuPathDB" id="HostDB:geneid_419453"/>
<dbReference type="eggNOG" id="ENOG502QPQ8">
    <property type="taxonomic scope" value="Eukaryota"/>
</dbReference>
<dbReference type="InParanoid" id="Q5ZLN5"/>
<dbReference type="OrthoDB" id="2020831at2759"/>
<dbReference type="PhylomeDB" id="Q5ZLN5"/>
<dbReference type="PRO" id="PR:Q5ZLN5"/>
<dbReference type="Proteomes" id="UP000000539">
    <property type="component" value="Unassembled WGS sequence"/>
</dbReference>
<dbReference type="GO" id="GO:0000785">
    <property type="term" value="C:chromatin"/>
    <property type="evidence" value="ECO:0000318"/>
    <property type="project" value="GO_Central"/>
</dbReference>
<dbReference type="GO" id="GO:0010494">
    <property type="term" value="C:cytoplasmic stress granule"/>
    <property type="evidence" value="ECO:0007669"/>
    <property type="project" value="UniProtKB-SubCell"/>
</dbReference>
<dbReference type="GO" id="GO:0005739">
    <property type="term" value="C:mitochondrion"/>
    <property type="evidence" value="ECO:0007669"/>
    <property type="project" value="UniProtKB-SubCell"/>
</dbReference>
<dbReference type="GO" id="GO:0005654">
    <property type="term" value="C:nucleoplasm"/>
    <property type="evidence" value="ECO:0000318"/>
    <property type="project" value="GO_Central"/>
</dbReference>
<dbReference type="GO" id="GO:0003677">
    <property type="term" value="F:DNA binding"/>
    <property type="evidence" value="ECO:0007669"/>
    <property type="project" value="UniProtKB-KW"/>
</dbReference>
<dbReference type="GO" id="GO:0003723">
    <property type="term" value="F:RNA binding"/>
    <property type="evidence" value="ECO:0000318"/>
    <property type="project" value="GO_Central"/>
</dbReference>
<dbReference type="GO" id="GO:0006397">
    <property type="term" value="P:mRNA processing"/>
    <property type="evidence" value="ECO:0007669"/>
    <property type="project" value="UniProtKB-KW"/>
</dbReference>
<dbReference type="GO" id="GO:0042752">
    <property type="term" value="P:regulation of circadian rhythm"/>
    <property type="evidence" value="ECO:0000250"/>
    <property type="project" value="UniProtKB"/>
</dbReference>
<dbReference type="GO" id="GO:0010468">
    <property type="term" value="P:regulation of gene expression"/>
    <property type="evidence" value="ECO:0000318"/>
    <property type="project" value="GO_Central"/>
</dbReference>
<dbReference type="GO" id="GO:0031647">
    <property type="term" value="P:regulation of protein stability"/>
    <property type="evidence" value="ECO:0000250"/>
    <property type="project" value="UniProtKB"/>
</dbReference>
<dbReference type="GO" id="GO:0048511">
    <property type="term" value="P:rhythmic process"/>
    <property type="evidence" value="ECO:0007669"/>
    <property type="project" value="UniProtKB-KW"/>
</dbReference>
<dbReference type="GO" id="GO:0008380">
    <property type="term" value="P:RNA splicing"/>
    <property type="evidence" value="ECO:0007669"/>
    <property type="project" value="UniProtKB-KW"/>
</dbReference>
<dbReference type="CDD" id="cd19609">
    <property type="entry name" value="NTD_TDP-43"/>
    <property type="match status" value="1"/>
</dbReference>
<dbReference type="CDD" id="cd12321">
    <property type="entry name" value="RRM1_TDP43"/>
    <property type="match status" value="1"/>
</dbReference>
<dbReference type="CDD" id="cd12322">
    <property type="entry name" value="RRM2_TDP43"/>
    <property type="match status" value="1"/>
</dbReference>
<dbReference type="FunFam" id="3.30.70.330:FF:000098">
    <property type="entry name" value="TAR DNA-binding protein 43"/>
    <property type="match status" value="1"/>
</dbReference>
<dbReference type="FunFam" id="3.30.70.330:FF:000107">
    <property type="entry name" value="TAR DNA-binding protein 43"/>
    <property type="match status" value="1"/>
</dbReference>
<dbReference type="Gene3D" id="3.30.70.330">
    <property type="match status" value="2"/>
</dbReference>
<dbReference type="InterPro" id="IPR012677">
    <property type="entry name" value="Nucleotide-bd_a/b_plait_sf"/>
</dbReference>
<dbReference type="InterPro" id="IPR035979">
    <property type="entry name" value="RBD_domain_sf"/>
</dbReference>
<dbReference type="InterPro" id="IPR000504">
    <property type="entry name" value="RRM_dom"/>
</dbReference>
<dbReference type="InterPro" id="IPR049124">
    <property type="entry name" value="TDP-43_C"/>
</dbReference>
<dbReference type="InterPro" id="IPR041105">
    <property type="entry name" value="TDP-43_N"/>
</dbReference>
<dbReference type="PANTHER" id="PTHR48033">
    <property type="entry name" value="RNA-BINDING (RRM/RBD/RNP MOTIFS) FAMILY PROTEIN"/>
    <property type="match status" value="1"/>
</dbReference>
<dbReference type="PANTHER" id="PTHR48033:SF9">
    <property type="entry name" value="TAR DNA-BINDING PROTEIN 43"/>
    <property type="match status" value="1"/>
</dbReference>
<dbReference type="Pfam" id="PF00076">
    <property type="entry name" value="RRM_1"/>
    <property type="match status" value="2"/>
</dbReference>
<dbReference type="Pfam" id="PF20910">
    <property type="entry name" value="TDP-43_C"/>
    <property type="match status" value="1"/>
</dbReference>
<dbReference type="Pfam" id="PF18694">
    <property type="entry name" value="TDP-43_N"/>
    <property type="match status" value="1"/>
</dbReference>
<dbReference type="SMART" id="SM00360">
    <property type="entry name" value="RRM"/>
    <property type="match status" value="2"/>
</dbReference>
<dbReference type="SUPFAM" id="SSF54928">
    <property type="entry name" value="RNA-binding domain, RBD"/>
    <property type="match status" value="2"/>
</dbReference>
<dbReference type="PROSITE" id="PS50102">
    <property type="entry name" value="RRM"/>
    <property type="match status" value="2"/>
</dbReference>